<reference key="1">
    <citation type="journal article" date="2007" name="PLoS Genet.">
        <title>Patterns and implications of gene gain and loss in the evolution of Prochlorococcus.</title>
        <authorList>
            <person name="Kettler G.C."/>
            <person name="Martiny A.C."/>
            <person name="Huang K."/>
            <person name="Zucker J."/>
            <person name="Coleman M.L."/>
            <person name="Rodrigue S."/>
            <person name="Chen F."/>
            <person name="Lapidus A."/>
            <person name="Ferriera S."/>
            <person name="Johnson J."/>
            <person name="Steglich C."/>
            <person name="Church G.M."/>
            <person name="Richardson P."/>
            <person name="Chisholm S.W."/>
        </authorList>
    </citation>
    <scope>NUCLEOTIDE SEQUENCE [LARGE SCALE GENOMIC DNA]</scope>
    <source>
        <strain>AS9601</strain>
    </source>
</reference>
<accession>A2BTB8</accession>
<feature type="chain" id="PRO_1000058877" description="Adenylate kinase">
    <location>
        <begin position="1"/>
        <end position="182"/>
    </location>
</feature>
<feature type="region of interest" description="NMP" evidence="1">
    <location>
        <begin position="32"/>
        <end position="61"/>
    </location>
</feature>
<feature type="region of interest" description="LID" evidence="1">
    <location>
        <begin position="126"/>
        <end position="132"/>
    </location>
</feature>
<feature type="binding site" evidence="1">
    <location>
        <begin position="12"/>
        <end position="17"/>
    </location>
    <ligand>
        <name>ATP</name>
        <dbReference type="ChEBI" id="CHEBI:30616"/>
    </ligand>
</feature>
<feature type="binding site" evidence="1">
    <location>
        <position position="33"/>
    </location>
    <ligand>
        <name>AMP</name>
        <dbReference type="ChEBI" id="CHEBI:456215"/>
    </ligand>
</feature>
<feature type="binding site" evidence="1">
    <location>
        <position position="38"/>
    </location>
    <ligand>
        <name>AMP</name>
        <dbReference type="ChEBI" id="CHEBI:456215"/>
    </ligand>
</feature>
<feature type="binding site" evidence="1">
    <location>
        <begin position="59"/>
        <end position="61"/>
    </location>
    <ligand>
        <name>AMP</name>
        <dbReference type="ChEBI" id="CHEBI:456215"/>
    </ligand>
</feature>
<feature type="binding site" evidence="1">
    <location>
        <begin position="85"/>
        <end position="88"/>
    </location>
    <ligand>
        <name>AMP</name>
        <dbReference type="ChEBI" id="CHEBI:456215"/>
    </ligand>
</feature>
<feature type="binding site" evidence="1">
    <location>
        <position position="92"/>
    </location>
    <ligand>
        <name>AMP</name>
        <dbReference type="ChEBI" id="CHEBI:456215"/>
    </ligand>
</feature>
<feature type="binding site" evidence="1">
    <location>
        <position position="127"/>
    </location>
    <ligand>
        <name>ATP</name>
        <dbReference type="ChEBI" id="CHEBI:30616"/>
    </ligand>
</feature>
<feature type="binding site" evidence="1">
    <location>
        <position position="129"/>
    </location>
    <ligand>
        <name>AMP</name>
        <dbReference type="ChEBI" id="CHEBI:456215"/>
    </ligand>
</feature>
<feature type="binding site" evidence="1">
    <location>
        <position position="140"/>
    </location>
    <ligand>
        <name>AMP</name>
        <dbReference type="ChEBI" id="CHEBI:456215"/>
    </ligand>
</feature>
<feature type="binding site" evidence="1">
    <location>
        <position position="168"/>
    </location>
    <ligand>
        <name>ATP</name>
        <dbReference type="ChEBI" id="CHEBI:30616"/>
    </ligand>
</feature>
<name>KAD_PROMS</name>
<gene>
    <name evidence="1" type="primary">adk</name>
    <name type="ordered locus">A9601_17461</name>
</gene>
<organism>
    <name type="scientific">Prochlorococcus marinus (strain AS9601)</name>
    <dbReference type="NCBI Taxonomy" id="146891"/>
    <lineage>
        <taxon>Bacteria</taxon>
        <taxon>Bacillati</taxon>
        <taxon>Cyanobacteriota</taxon>
        <taxon>Cyanophyceae</taxon>
        <taxon>Synechococcales</taxon>
        <taxon>Prochlorococcaceae</taxon>
        <taxon>Prochlorococcus</taxon>
    </lineage>
</organism>
<protein>
    <recommendedName>
        <fullName evidence="1">Adenylate kinase</fullName>
        <shortName evidence="1">AK</shortName>
        <ecNumber evidence="1">2.7.4.3</ecNumber>
    </recommendedName>
    <alternativeName>
        <fullName evidence="1">ATP-AMP transphosphorylase</fullName>
    </alternativeName>
    <alternativeName>
        <fullName evidence="1">ATP:AMP phosphotransferase</fullName>
    </alternativeName>
    <alternativeName>
        <fullName evidence="1">Adenylate monophosphate kinase</fullName>
    </alternativeName>
</protein>
<keyword id="KW-0067">ATP-binding</keyword>
<keyword id="KW-0963">Cytoplasm</keyword>
<keyword id="KW-0418">Kinase</keyword>
<keyword id="KW-0545">Nucleotide biosynthesis</keyword>
<keyword id="KW-0547">Nucleotide-binding</keyword>
<keyword id="KW-0808">Transferase</keyword>
<sequence>MKKHLLFLGAPGAGKGTQAELLSQTTSYLHLSTGELLRKEIEMNTNLGIQVKDIMNRGELVSDELVLKIVRQNLVKDNIGWILDGYPRNLSQADSLNEVLSEINQPLEVVFYLDIPEEVLIERLLLRGRKDDTEETIRTRVDIYKKTTEPLIQYFKDLSLLEYINADRDLKTISSDIKQKMA</sequence>
<evidence type="ECO:0000255" key="1">
    <source>
        <dbReference type="HAMAP-Rule" id="MF_00235"/>
    </source>
</evidence>
<proteinExistence type="inferred from homology"/>
<comment type="function">
    <text evidence="1">Catalyzes the reversible transfer of the terminal phosphate group between ATP and AMP. Plays an important role in cellular energy homeostasis and in adenine nucleotide metabolism.</text>
</comment>
<comment type="catalytic activity">
    <reaction evidence="1">
        <text>AMP + ATP = 2 ADP</text>
        <dbReference type="Rhea" id="RHEA:12973"/>
        <dbReference type="ChEBI" id="CHEBI:30616"/>
        <dbReference type="ChEBI" id="CHEBI:456215"/>
        <dbReference type="ChEBI" id="CHEBI:456216"/>
        <dbReference type="EC" id="2.7.4.3"/>
    </reaction>
</comment>
<comment type="pathway">
    <text evidence="1">Purine metabolism; AMP biosynthesis via salvage pathway; AMP from ADP: step 1/1.</text>
</comment>
<comment type="subunit">
    <text evidence="1">Monomer.</text>
</comment>
<comment type="subcellular location">
    <subcellularLocation>
        <location evidence="1">Cytoplasm</location>
    </subcellularLocation>
</comment>
<comment type="domain">
    <text evidence="1">Consists of three domains, a large central CORE domain and two small peripheral domains, NMPbind and LID, which undergo movements during catalysis. The LID domain closes over the site of phosphoryl transfer upon ATP binding. Assembling and dissambling the active center during each catalytic cycle provides an effective means to prevent ATP hydrolysis.</text>
</comment>
<comment type="similarity">
    <text evidence="1">Belongs to the adenylate kinase family.</text>
</comment>
<dbReference type="EC" id="2.7.4.3" evidence="1"/>
<dbReference type="EMBL" id="CP000551">
    <property type="protein sequence ID" value="ABM71029.1"/>
    <property type="molecule type" value="Genomic_DNA"/>
</dbReference>
<dbReference type="RefSeq" id="WP_011819153.1">
    <property type="nucleotide sequence ID" value="NC_008816.1"/>
</dbReference>
<dbReference type="SMR" id="A2BTB8"/>
<dbReference type="STRING" id="146891.A9601_17461"/>
<dbReference type="KEGG" id="pmb:A9601_17461"/>
<dbReference type="eggNOG" id="COG0563">
    <property type="taxonomic scope" value="Bacteria"/>
</dbReference>
<dbReference type="HOGENOM" id="CLU_032354_4_1_3"/>
<dbReference type="OrthoDB" id="9805030at2"/>
<dbReference type="UniPathway" id="UPA00588">
    <property type="reaction ID" value="UER00649"/>
</dbReference>
<dbReference type="Proteomes" id="UP000002590">
    <property type="component" value="Chromosome"/>
</dbReference>
<dbReference type="GO" id="GO:0005737">
    <property type="term" value="C:cytoplasm"/>
    <property type="evidence" value="ECO:0007669"/>
    <property type="project" value="UniProtKB-SubCell"/>
</dbReference>
<dbReference type="GO" id="GO:0004017">
    <property type="term" value="F:adenylate kinase activity"/>
    <property type="evidence" value="ECO:0007669"/>
    <property type="project" value="UniProtKB-UniRule"/>
</dbReference>
<dbReference type="GO" id="GO:0005524">
    <property type="term" value="F:ATP binding"/>
    <property type="evidence" value="ECO:0007669"/>
    <property type="project" value="UniProtKB-UniRule"/>
</dbReference>
<dbReference type="GO" id="GO:0044209">
    <property type="term" value="P:AMP salvage"/>
    <property type="evidence" value="ECO:0007669"/>
    <property type="project" value="UniProtKB-UniRule"/>
</dbReference>
<dbReference type="CDD" id="cd01428">
    <property type="entry name" value="ADK"/>
    <property type="match status" value="1"/>
</dbReference>
<dbReference type="Gene3D" id="3.40.50.300">
    <property type="entry name" value="P-loop containing nucleotide triphosphate hydrolases"/>
    <property type="match status" value="1"/>
</dbReference>
<dbReference type="HAMAP" id="MF_00235">
    <property type="entry name" value="Adenylate_kinase_Adk"/>
    <property type="match status" value="1"/>
</dbReference>
<dbReference type="InterPro" id="IPR000850">
    <property type="entry name" value="Adenylat/UMP-CMP_kin"/>
</dbReference>
<dbReference type="InterPro" id="IPR033690">
    <property type="entry name" value="Adenylat_kinase_CS"/>
</dbReference>
<dbReference type="InterPro" id="IPR027417">
    <property type="entry name" value="P-loop_NTPase"/>
</dbReference>
<dbReference type="NCBIfam" id="NF001381">
    <property type="entry name" value="PRK00279.1-3"/>
    <property type="match status" value="1"/>
</dbReference>
<dbReference type="NCBIfam" id="NF011100">
    <property type="entry name" value="PRK14527.1"/>
    <property type="match status" value="1"/>
</dbReference>
<dbReference type="NCBIfam" id="NF011104">
    <property type="entry name" value="PRK14531.1"/>
    <property type="match status" value="1"/>
</dbReference>
<dbReference type="PANTHER" id="PTHR23359">
    <property type="entry name" value="NUCLEOTIDE KINASE"/>
    <property type="match status" value="1"/>
</dbReference>
<dbReference type="Pfam" id="PF00406">
    <property type="entry name" value="ADK"/>
    <property type="match status" value="1"/>
</dbReference>
<dbReference type="PRINTS" id="PR00094">
    <property type="entry name" value="ADENYLTKNASE"/>
</dbReference>
<dbReference type="SUPFAM" id="SSF52540">
    <property type="entry name" value="P-loop containing nucleoside triphosphate hydrolases"/>
    <property type="match status" value="1"/>
</dbReference>
<dbReference type="PROSITE" id="PS00113">
    <property type="entry name" value="ADENYLATE_KINASE"/>
    <property type="match status" value="1"/>
</dbReference>